<name>TYSY_STRPG</name>
<gene>
    <name evidence="1" type="primary">thyA</name>
    <name type="ordered locus">SpyM51120</name>
</gene>
<keyword id="KW-0963">Cytoplasm</keyword>
<keyword id="KW-0489">Methyltransferase</keyword>
<keyword id="KW-0545">Nucleotide biosynthesis</keyword>
<keyword id="KW-0808">Transferase</keyword>
<protein>
    <recommendedName>
        <fullName evidence="1">Thymidylate synthase</fullName>
        <shortName evidence="1">TS</shortName>
        <shortName evidence="1">TSase</shortName>
        <ecNumber evidence="1">2.1.1.45</ecNumber>
    </recommendedName>
</protein>
<sequence length="279" mass="32564">MTKADQIFKANIQKIINEGSLSEQARPKYKDGRTAHSKYITGAFAEYDLAKGEFPITTLRPIPIKSAIKELFWIYQDQSNSLDVLEAKYNVHYWNEWEVDQTRTIGQRYGAVVKKHDIISKILKQLAENPWNRRNVISLWDYEAFEETKGLLPCAFQIMFDVRRVGEDLYLDASLTQRSNDILVAHHINAMQYVALQMMIAKHFGWKIGKFFYFVNNLHIYDNQFDQAQELLKRQPVASQPKLVLNVPDGTNFFDIKPDDFELQNYDPVKPQLHFDLAI</sequence>
<organism>
    <name type="scientific">Streptococcus pyogenes serotype M5 (strain Manfredo)</name>
    <dbReference type="NCBI Taxonomy" id="160491"/>
    <lineage>
        <taxon>Bacteria</taxon>
        <taxon>Bacillati</taxon>
        <taxon>Bacillota</taxon>
        <taxon>Bacilli</taxon>
        <taxon>Lactobacillales</taxon>
        <taxon>Streptococcaceae</taxon>
        <taxon>Streptococcus</taxon>
    </lineage>
</organism>
<comment type="function">
    <text evidence="1">Catalyzes the reductive methylation of 2'-deoxyuridine-5'-monophosphate (dUMP) to 2'-deoxythymidine-5'-monophosphate (dTMP) while utilizing 5,10-methylenetetrahydrofolate (mTHF) as the methyl donor and reductant in the reaction, yielding dihydrofolate (DHF) as a by-product. This enzymatic reaction provides an intracellular de novo source of dTMP, an essential precursor for DNA biosynthesis.</text>
</comment>
<comment type="catalytic activity">
    <reaction evidence="1">
        <text>dUMP + (6R)-5,10-methylene-5,6,7,8-tetrahydrofolate = 7,8-dihydrofolate + dTMP</text>
        <dbReference type="Rhea" id="RHEA:12104"/>
        <dbReference type="ChEBI" id="CHEBI:15636"/>
        <dbReference type="ChEBI" id="CHEBI:57451"/>
        <dbReference type="ChEBI" id="CHEBI:63528"/>
        <dbReference type="ChEBI" id="CHEBI:246422"/>
        <dbReference type="EC" id="2.1.1.45"/>
    </reaction>
</comment>
<comment type="pathway">
    <text evidence="1">Pyrimidine metabolism; dTTP biosynthesis.</text>
</comment>
<comment type="subunit">
    <text evidence="1">Homodimer.</text>
</comment>
<comment type="subcellular location">
    <subcellularLocation>
        <location evidence="1">Cytoplasm</location>
    </subcellularLocation>
</comment>
<comment type="similarity">
    <text evidence="1">Belongs to the thymidylate synthase family. Bacterial-type ThyA subfamily.</text>
</comment>
<reference key="1">
    <citation type="journal article" date="2007" name="J. Bacteriol.">
        <title>Complete genome of acute rheumatic fever-associated serotype M5 Streptococcus pyogenes strain Manfredo.</title>
        <authorList>
            <person name="Holden M.T.G."/>
            <person name="Scott A."/>
            <person name="Cherevach I."/>
            <person name="Chillingworth T."/>
            <person name="Churcher C."/>
            <person name="Cronin A."/>
            <person name="Dowd L."/>
            <person name="Feltwell T."/>
            <person name="Hamlin N."/>
            <person name="Holroyd S."/>
            <person name="Jagels K."/>
            <person name="Moule S."/>
            <person name="Mungall K."/>
            <person name="Quail M.A."/>
            <person name="Price C."/>
            <person name="Rabbinowitsch E."/>
            <person name="Sharp S."/>
            <person name="Skelton J."/>
            <person name="Whitehead S."/>
            <person name="Barrell B.G."/>
            <person name="Kehoe M."/>
            <person name="Parkhill J."/>
        </authorList>
    </citation>
    <scope>NUCLEOTIDE SEQUENCE [LARGE SCALE GENOMIC DNA]</scope>
    <source>
        <strain>Manfredo</strain>
    </source>
</reference>
<accession>A2RF20</accession>
<evidence type="ECO:0000255" key="1">
    <source>
        <dbReference type="HAMAP-Rule" id="MF_00008"/>
    </source>
</evidence>
<feature type="chain" id="PRO_1000000693" description="Thymidylate synthase">
    <location>
        <begin position="1"/>
        <end position="279"/>
    </location>
</feature>
<feature type="active site" description="Nucleophile" evidence="1">
    <location>
        <position position="154"/>
    </location>
</feature>
<feature type="binding site" evidence="1">
    <location>
        <begin position="133"/>
        <end position="134"/>
    </location>
    <ligand>
        <name>dUMP</name>
        <dbReference type="ChEBI" id="CHEBI:246422"/>
        <note>ligand shared between dimeric partners</note>
    </ligand>
</feature>
<feature type="binding site" description="in other chain" evidence="1">
    <location>
        <begin position="178"/>
        <end position="181"/>
    </location>
    <ligand>
        <name>dUMP</name>
        <dbReference type="ChEBI" id="CHEBI:246422"/>
        <note>ligand shared between dimeric partners</note>
    </ligand>
</feature>
<feature type="binding site" evidence="1">
    <location>
        <position position="181"/>
    </location>
    <ligand>
        <name>(6R)-5,10-methylene-5,6,7,8-tetrahydrofolate</name>
        <dbReference type="ChEBI" id="CHEBI:15636"/>
    </ligand>
</feature>
<feature type="binding site" description="in other chain" evidence="1">
    <location>
        <position position="189"/>
    </location>
    <ligand>
        <name>dUMP</name>
        <dbReference type="ChEBI" id="CHEBI:246422"/>
        <note>ligand shared between dimeric partners</note>
    </ligand>
</feature>
<feature type="binding site" description="in other chain" evidence="1">
    <location>
        <begin position="219"/>
        <end position="221"/>
    </location>
    <ligand>
        <name>dUMP</name>
        <dbReference type="ChEBI" id="CHEBI:246422"/>
        <note>ligand shared between dimeric partners</note>
    </ligand>
</feature>
<feature type="binding site" evidence="1">
    <location>
        <position position="278"/>
    </location>
    <ligand>
        <name>(6R)-5,10-methylene-5,6,7,8-tetrahydrofolate</name>
        <dbReference type="ChEBI" id="CHEBI:15636"/>
    </ligand>
</feature>
<proteinExistence type="inferred from homology"/>
<dbReference type="EC" id="2.1.1.45" evidence="1"/>
<dbReference type="EMBL" id="AM295007">
    <property type="protein sequence ID" value="CAM30446.1"/>
    <property type="molecule type" value="Genomic_DNA"/>
</dbReference>
<dbReference type="RefSeq" id="WP_011017679.1">
    <property type="nucleotide sequence ID" value="NC_009332.1"/>
</dbReference>
<dbReference type="SMR" id="A2RF20"/>
<dbReference type="KEGG" id="spf:SpyM51120"/>
<dbReference type="HOGENOM" id="CLU_021669_0_0_9"/>
<dbReference type="UniPathway" id="UPA00575"/>
<dbReference type="GO" id="GO:0005829">
    <property type="term" value="C:cytosol"/>
    <property type="evidence" value="ECO:0007669"/>
    <property type="project" value="TreeGrafter"/>
</dbReference>
<dbReference type="GO" id="GO:0004799">
    <property type="term" value="F:thymidylate synthase activity"/>
    <property type="evidence" value="ECO:0007669"/>
    <property type="project" value="UniProtKB-UniRule"/>
</dbReference>
<dbReference type="GO" id="GO:0006231">
    <property type="term" value="P:dTMP biosynthetic process"/>
    <property type="evidence" value="ECO:0007669"/>
    <property type="project" value="UniProtKB-UniRule"/>
</dbReference>
<dbReference type="GO" id="GO:0006235">
    <property type="term" value="P:dTTP biosynthetic process"/>
    <property type="evidence" value="ECO:0007669"/>
    <property type="project" value="UniProtKB-UniRule"/>
</dbReference>
<dbReference type="GO" id="GO:0032259">
    <property type="term" value="P:methylation"/>
    <property type="evidence" value="ECO:0007669"/>
    <property type="project" value="UniProtKB-KW"/>
</dbReference>
<dbReference type="CDD" id="cd00351">
    <property type="entry name" value="TS_Pyrimidine_HMase"/>
    <property type="match status" value="1"/>
</dbReference>
<dbReference type="Gene3D" id="3.30.572.10">
    <property type="entry name" value="Thymidylate synthase/dCMP hydroxymethylase domain"/>
    <property type="match status" value="1"/>
</dbReference>
<dbReference type="HAMAP" id="MF_00008">
    <property type="entry name" value="Thymidy_synth_bact"/>
    <property type="match status" value="1"/>
</dbReference>
<dbReference type="InterPro" id="IPR045097">
    <property type="entry name" value="Thymidate_synth/dCMP_Mease"/>
</dbReference>
<dbReference type="InterPro" id="IPR023451">
    <property type="entry name" value="Thymidate_synth/dCMP_Mease_dom"/>
</dbReference>
<dbReference type="InterPro" id="IPR036926">
    <property type="entry name" value="Thymidate_synth/dCMP_Mease_sf"/>
</dbReference>
<dbReference type="InterPro" id="IPR000398">
    <property type="entry name" value="Thymidylate_synthase"/>
</dbReference>
<dbReference type="InterPro" id="IPR020940">
    <property type="entry name" value="Thymidylate_synthase_AS"/>
</dbReference>
<dbReference type="NCBIfam" id="NF002495">
    <property type="entry name" value="PRK01827.1-1"/>
    <property type="match status" value="1"/>
</dbReference>
<dbReference type="PANTHER" id="PTHR11548">
    <property type="entry name" value="THYMIDYLATE SYNTHASE 1"/>
    <property type="match status" value="1"/>
</dbReference>
<dbReference type="PANTHER" id="PTHR11548:SF1">
    <property type="entry name" value="THYMIDYLATE SYNTHASE 1"/>
    <property type="match status" value="1"/>
</dbReference>
<dbReference type="Pfam" id="PF00303">
    <property type="entry name" value="Thymidylat_synt"/>
    <property type="match status" value="1"/>
</dbReference>
<dbReference type="PRINTS" id="PR00108">
    <property type="entry name" value="THYMDSNTHASE"/>
</dbReference>
<dbReference type="SUPFAM" id="SSF55831">
    <property type="entry name" value="Thymidylate synthase/dCMP hydroxymethylase"/>
    <property type="match status" value="1"/>
</dbReference>
<dbReference type="PROSITE" id="PS00091">
    <property type="entry name" value="THYMIDYLATE_SYNTHASE"/>
    <property type="match status" value="1"/>
</dbReference>